<keyword id="KW-0002">3D-structure</keyword>
<keyword id="KW-0963">Cytoplasm</keyword>
<keyword id="KW-0396">Initiation factor</keyword>
<keyword id="KW-0597">Phosphoprotein</keyword>
<keyword id="KW-0648">Protein biosynthesis</keyword>
<keyword id="KW-1185">Reference proteome</keyword>
<keyword id="KW-0810">Translation regulation</keyword>
<reference key="1">
    <citation type="journal article" date="2002" name="Nature">
        <title>The genome sequence of Schizosaccharomyces pombe.</title>
        <authorList>
            <person name="Wood V."/>
            <person name="Gwilliam R."/>
            <person name="Rajandream M.A."/>
            <person name="Lyne M.H."/>
            <person name="Lyne R."/>
            <person name="Stewart A."/>
            <person name="Sgouros J.G."/>
            <person name="Peat N."/>
            <person name="Hayles J."/>
            <person name="Baker S.G."/>
            <person name="Basham D."/>
            <person name="Bowman S."/>
            <person name="Brooks K."/>
            <person name="Brown D."/>
            <person name="Brown S."/>
            <person name="Chillingworth T."/>
            <person name="Churcher C.M."/>
            <person name="Collins M."/>
            <person name="Connor R."/>
            <person name="Cronin A."/>
            <person name="Davis P."/>
            <person name="Feltwell T."/>
            <person name="Fraser A."/>
            <person name="Gentles S."/>
            <person name="Goble A."/>
            <person name="Hamlin N."/>
            <person name="Harris D.E."/>
            <person name="Hidalgo J."/>
            <person name="Hodgson G."/>
            <person name="Holroyd S."/>
            <person name="Hornsby T."/>
            <person name="Howarth S."/>
            <person name="Huckle E.J."/>
            <person name="Hunt S."/>
            <person name="Jagels K."/>
            <person name="James K.D."/>
            <person name="Jones L."/>
            <person name="Jones M."/>
            <person name="Leather S."/>
            <person name="McDonald S."/>
            <person name="McLean J."/>
            <person name="Mooney P."/>
            <person name="Moule S."/>
            <person name="Mungall K.L."/>
            <person name="Murphy L.D."/>
            <person name="Niblett D."/>
            <person name="Odell C."/>
            <person name="Oliver K."/>
            <person name="O'Neil S."/>
            <person name="Pearson D."/>
            <person name="Quail M.A."/>
            <person name="Rabbinowitsch E."/>
            <person name="Rutherford K.M."/>
            <person name="Rutter S."/>
            <person name="Saunders D."/>
            <person name="Seeger K."/>
            <person name="Sharp S."/>
            <person name="Skelton J."/>
            <person name="Simmonds M.N."/>
            <person name="Squares R."/>
            <person name="Squares S."/>
            <person name="Stevens K."/>
            <person name="Taylor K."/>
            <person name="Taylor R.G."/>
            <person name="Tivey A."/>
            <person name="Walsh S.V."/>
            <person name="Warren T."/>
            <person name="Whitehead S."/>
            <person name="Woodward J.R."/>
            <person name="Volckaert G."/>
            <person name="Aert R."/>
            <person name="Robben J."/>
            <person name="Grymonprez B."/>
            <person name="Weltjens I."/>
            <person name="Vanstreels E."/>
            <person name="Rieger M."/>
            <person name="Schaefer M."/>
            <person name="Mueller-Auer S."/>
            <person name="Gabel C."/>
            <person name="Fuchs M."/>
            <person name="Duesterhoeft A."/>
            <person name="Fritzc C."/>
            <person name="Holzer E."/>
            <person name="Moestl D."/>
            <person name="Hilbert H."/>
            <person name="Borzym K."/>
            <person name="Langer I."/>
            <person name="Beck A."/>
            <person name="Lehrach H."/>
            <person name="Reinhardt R."/>
            <person name="Pohl T.M."/>
            <person name="Eger P."/>
            <person name="Zimmermann W."/>
            <person name="Wedler H."/>
            <person name="Wambutt R."/>
            <person name="Purnelle B."/>
            <person name="Goffeau A."/>
            <person name="Cadieu E."/>
            <person name="Dreano S."/>
            <person name="Gloux S."/>
            <person name="Lelaure V."/>
            <person name="Mottier S."/>
            <person name="Galibert F."/>
            <person name="Aves S.J."/>
            <person name="Xiang Z."/>
            <person name="Hunt C."/>
            <person name="Moore K."/>
            <person name="Hurst S.M."/>
            <person name="Lucas M."/>
            <person name="Rochet M."/>
            <person name="Gaillardin C."/>
            <person name="Tallada V.A."/>
            <person name="Garzon A."/>
            <person name="Thode G."/>
            <person name="Daga R.R."/>
            <person name="Cruzado L."/>
            <person name="Jimenez J."/>
            <person name="Sanchez M."/>
            <person name="del Rey F."/>
            <person name="Benito J."/>
            <person name="Dominguez A."/>
            <person name="Revuelta J.L."/>
            <person name="Moreno S."/>
            <person name="Armstrong J."/>
            <person name="Forsburg S.L."/>
            <person name="Cerutti L."/>
            <person name="Lowe T."/>
            <person name="McCombie W.R."/>
            <person name="Paulsen I."/>
            <person name="Potashkin J."/>
            <person name="Shpakovski G.V."/>
            <person name="Ussery D."/>
            <person name="Barrell B.G."/>
            <person name="Nurse P."/>
        </authorList>
    </citation>
    <scope>NUCLEOTIDE SEQUENCE [LARGE SCALE GENOMIC DNA]</scope>
    <source>
        <strain>972 / ATCC 24843</strain>
    </source>
</reference>
<reference key="2">
    <citation type="journal article" date="2006" name="Nat. Biotechnol.">
        <title>ORFeome cloning and global analysis of protein localization in the fission yeast Schizosaccharomyces pombe.</title>
        <authorList>
            <person name="Matsuyama A."/>
            <person name="Arai R."/>
            <person name="Yashiroda Y."/>
            <person name="Shirai A."/>
            <person name="Kamata A."/>
            <person name="Sekido S."/>
            <person name="Kobayashi Y."/>
            <person name="Hashimoto A."/>
            <person name="Hamamoto M."/>
            <person name="Hiraoka Y."/>
            <person name="Horinouchi S."/>
            <person name="Yoshida M."/>
        </authorList>
    </citation>
    <scope>SUBCELLULAR LOCATION [LARGE SCALE ANALYSIS]</scope>
</reference>
<reference key="3">
    <citation type="journal article" date="2008" name="J. Proteome Res.">
        <title>Phosphoproteome analysis of fission yeast.</title>
        <authorList>
            <person name="Wilson-Grady J.T."/>
            <person name="Villen J."/>
            <person name="Gygi S.P."/>
        </authorList>
    </citation>
    <scope>PHOSPHORYLATION [LARGE SCALE ANALYSIS] AT SER-106; SER-108 AND SER-112</scope>
    <scope>IDENTIFICATION BY MASS SPECTROMETRY</scope>
</reference>
<reference key="4">
    <citation type="journal article" date="2016" name="J. Struct. Funct. Genomics">
        <title>Expression, purification, and crystallization of Schizosaccharomyces pombe eIF2B.</title>
        <authorList>
            <person name="Kashiwagi K."/>
            <person name="Shigeta T."/>
            <person name="Imataka H."/>
            <person name="Ito T."/>
            <person name="Yokoyama S."/>
        </authorList>
    </citation>
    <scope>FUNCTION</scope>
    <scope>SUBUNIT</scope>
    <scope>IDENTIFICATION IN THE EIF2B COMPLEX</scope>
</reference>
<reference evidence="8" key="5">
    <citation type="journal article" date="2016" name="Nature">
        <title>Crystal structure of eukaryotic translation initiation factor 2B.</title>
        <authorList>
            <person name="Kashiwagi K."/>
            <person name="Takahashi M."/>
            <person name="Nishimoto M."/>
            <person name="Hiyama T.B."/>
            <person name="Higo T."/>
            <person name="Umehara T."/>
            <person name="Sakamoto K."/>
            <person name="Ito T."/>
            <person name="Yokoyama S."/>
        </authorList>
    </citation>
    <scope>X-RAY CRYSTALLOGRAPHY (2.99 ANGSTROMS)</scope>
    <scope>FUNCTION</scope>
    <scope>SUBUNIT</scope>
    <scope>IDENTIFICATION IN THE EIF2B COMPLEX</scope>
</reference>
<reference evidence="9 10" key="6">
    <citation type="journal article" date="2019" name="Science">
        <title>Structural basis for eIF2B inhibition in integrated stress response.</title>
        <authorList>
            <person name="Kashiwagi K."/>
            <person name="Yokoyama T."/>
            <person name="Nishimoto M."/>
            <person name="Takahashi M."/>
            <person name="Sakamoto A."/>
            <person name="Yonemochi M."/>
            <person name="Shirouzu M."/>
            <person name="Ito T."/>
        </authorList>
    </citation>
    <scope>X-RAY CRYSTALLOGRAPHY (3.35 ANGSTROMS) IN COMPLEX WITH S.CEREVISIAE SUI2</scope>
    <scope>FUNCTION</scope>
    <scope>SUBUNIT</scope>
    <scope>IDENTIFICATION IN THE EIF2B COMPLEX</scope>
</reference>
<gene>
    <name type="primary">tif222</name>
    <name type="ORF">SPAC343.14c</name>
</gene>
<comment type="function">
    <text evidence="4 5 6">Acts as a component of the translation initiation factor 2B (eIF2B) complex, which catalyzes the exchange of GDP for GTP on the eukaryotic initiation factor 2 (eIF2) complex gamma subunit (PubMed:26901872, PubMed:27023709, PubMed:31048492). Its guanine nucleotide exchange factor activity is repressed when bound to eIF2 complex phosphorylated on the alpha subunit, thereby limiting the amount of methionyl-initiator methionine tRNA available to the ribosome and consequently global translation is repressed (PubMed:26901872, PubMed:31048492).</text>
</comment>
<comment type="subunit">
    <text evidence="4 5 6">Component of the translation initiation factor 2B (eIF2B) complex which is a heterodecamer of two sets of five different subunits: alpha, beta, gamma, delta and epsilon. Subunits alpha, beta and delta comprise a regulatory subcomplex and subunits epsilon and gamma comprise a catalytic subcomplex (PubMed:26901872, PubMed:27023709, PubMed:31048492). Within the complex, the hexameric regulatory complex resides at the center, with the two heterodimeric catalytic subcomplexes bound on opposite sides (PubMed:26901872, PubMed:31048492).</text>
</comment>
<comment type="interaction">
    <interactant intactId="EBI-16198490">
        <id>Q9UT76</id>
    </interactant>
    <interactant intactId="EBI-16198594">
        <id>P56286</id>
        <label>tif211</label>
    </interactant>
    <organismsDiffer>false</organismsDiffer>
    <experiments>2</experiments>
</comment>
<comment type="subcellular location">
    <subcellularLocation>
        <location evidence="2">Cytoplasm</location>
        <location evidence="2">Cytosol</location>
    </subcellularLocation>
</comment>
<comment type="similarity">
    <text evidence="7">Belongs to the eIF-2B alpha/beta/delta subunits family.</text>
</comment>
<protein>
    <recommendedName>
        <fullName>Translation initiation factor eIF2B subunit beta</fullName>
    </recommendedName>
    <alternativeName>
        <fullName>eIF2B GDP-GTP exchange factor subunit beta</fullName>
    </alternativeName>
</protein>
<accession>Q9UT76</accession>
<organism>
    <name type="scientific">Schizosaccharomyces pombe (strain 972 / ATCC 24843)</name>
    <name type="common">Fission yeast</name>
    <dbReference type="NCBI Taxonomy" id="284812"/>
    <lineage>
        <taxon>Eukaryota</taxon>
        <taxon>Fungi</taxon>
        <taxon>Dikarya</taxon>
        <taxon>Ascomycota</taxon>
        <taxon>Taphrinomycotina</taxon>
        <taxon>Schizosaccharomycetes</taxon>
        <taxon>Schizosaccharomycetales</taxon>
        <taxon>Schizosaccharomycetaceae</taxon>
        <taxon>Schizosaccharomyces</taxon>
    </lineage>
</organism>
<feature type="chain" id="PRO_0000317323" description="Translation initiation factor eIF2B subunit beta">
    <location>
        <begin position="1"/>
        <end position="393"/>
    </location>
</feature>
<feature type="region of interest" description="Disordered" evidence="1">
    <location>
        <begin position="105"/>
        <end position="125"/>
    </location>
</feature>
<feature type="modified residue" description="Phosphoserine" evidence="3">
    <location>
        <position position="106"/>
    </location>
</feature>
<feature type="modified residue" description="Phosphoserine" evidence="3">
    <location>
        <position position="108"/>
    </location>
</feature>
<feature type="modified residue" description="Phosphoserine" evidence="3">
    <location>
        <position position="112"/>
    </location>
</feature>
<feature type="helix" evidence="11">
    <location>
        <begin position="4"/>
        <end position="7"/>
    </location>
</feature>
<feature type="helix" evidence="11">
    <location>
        <begin position="11"/>
        <end position="21"/>
    </location>
</feature>
<feature type="helix" evidence="11">
    <location>
        <begin position="28"/>
        <end position="45"/>
    </location>
</feature>
<feature type="helix" evidence="11">
    <location>
        <begin position="51"/>
        <end position="68"/>
    </location>
</feature>
<feature type="helix" evidence="11">
    <location>
        <begin position="73"/>
        <end position="96"/>
    </location>
</feature>
<feature type="turn" evidence="12">
    <location>
        <begin position="98"/>
        <end position="100"/>
    </location>
</feature>
<feature type="helix" evidence="11">
    <location>
        <begin position="141"/>
        <end position="144"/>
    </location>
</feature>
<feature type="helix" evidence="11">
    <location>
        <begin position="170"/>
        <end position="184"/>
    </location>
</feature>
<feature type="helix" evidence="11">
    <location>
        <begin position="187"/>
        <end position="191"/>
    </location>
</feature>
<feature type="helix" evidence="11">
    <location>
        <begin position="192"/>
        <end position="197"/>
    </location>
</feature>
<feature type="strand" evidence="11">
    <location>
        <begin position="204"/>
        <end position="209"/>
    </location>
</feature>
<feature type="helix" evidence="11">
    <location>
        <begin position="212"/>
        <end position="222"/>
    </location>
</feature>
<feature type="strand" evidence="11">
    <location>
        <begin position="228"/>
        <end position="232"/>
    </location>
</feature>
<feature type="turn" evidence="11">
    <location>
        <begin position="235"/>
        <end position="237"/>
    </location>
</feature>
<feature type="helix" evidence="11">
    <location>
        <begin position="239"/>
        <end position="251"/>
    </location>
</feature>
<feature type="strand" evidence="11">
    <location>
        <begin position="255"/>
        <end position="259"/>
    </location>
</feature>
<feature type="helix" evidence="11">
    <location>
        <begin position="261"/>
        <end position="263"/>
    </location>
</feature>
<feature type="helix" evidence="11">
    <location>
        <begin position="264"/>
        <end position="267"/>
    </location>
</feature>
<feature type="helix" evidence="11">
    <location>
        <begin position="268"/>
        <end position="270"/>
    </location>
</feature>
<feature type="strand" evidence="11">
    <location>
        <begin position="273"/>
        <end position="276"/>
    </location>
</feature>
<feature type="strand" evidence="11">
    <location>
        <begin position="279"/>
        <end position="281"/>
    </location>
</feature>
<feature type="strand" evidence="11">
    <location>
        <begin position="287"/>
        <end position="290"/>
    </location>
</feature>
<feature type="helix" evidence="11">
    <location>
        <begin position="293"/>
        <end position="302"/>
    </location>
</feature>
<feature type="strand" evidence="11">
    <location>
        <begin position="307"/>
        <end position="310"/>
    </location>
</feature>
<feature type="helix" evidence="11">
    <location>
        <begin position="313"/>
        <end position="315"/>
    </location>
</feature>
<feature type="helix" evidence="11">
    <location>
        <begin position="324"/>
        <end position="327"/>
    </location>
</feature>
<feature type="helix" evidence="11">
    <location>
        <begin position="333"/>
        <end position="335"/>
    </location>
</feature>
<feature type="helix" evidence="11">
    <location>
        <begin position="342"/>
        <end position="346"/>
    </location>
</feature>
<feature type="strand" evidence="11">
    <location>
        <begin position="347"/>
        <end position="350"/>
    </location>
</feature>
<feature type="strand" evidence="11">
    <location>
        <begin position="355"/>
        <end position="358"/>
    </location>
</feature>
<feature type="helix" evidence="11">
    <location>
        <begin position="360"/>
        <end position="362"/>
    </location>
</feature>
<feature type="strand" evidence="11">
    <location>
        <begin position="365"/>
        <end position="368"/>
    </location>
</feature>
<feature type="strand" evidence="11">
    <location>
        <begin position="371"/>
        <end position="373"/>
    </location>
</feature>
<feature type="helix" evidence="11">
    <location>
        <begin position="375"/>
        <end position="377"/>
    </location>
</feature>
<feature type="helix" evidence="11">
    <location>
        <begin position="378"/>
        <end position="385"/>
    </location>
</feature>
<feature type="helix" evidence="11">
    <location>
        <begin position="388"/>
        <end position="391"/>
    </location>
</feature>
<sequence length="393" mass="43221">MSTINVEHTYPAVSSLIADLKSRKVQGPFAVAVETALVMRQVISQTRWSTVDQLIDTVRAVGSTLVKAQPTEFSCGNIIRRILRLIREEYQELLKTADENEKLIVSSSNSSSPSQKRDIPSNEKLVQSHEPVSVQMYSSMLNLLGRPTLESPTHSKTVGDSRVTGGMDMRAVIISGIQDVIDELDKINTDIEVQSMDHLHSNEIILTQGCSKTVEAFLRFAAKKRKFSVIVAEGFPNNQKGSHAMAKRLAQAGIDTTVISDATIFAIMSRVNKVILGTHAILGNGGLVTYSGAQLVAQAARHHATPVVVCSGIYKLSPVYPYDLESIIQLSSPDKIMSFNEGDLISRAEILNPYYDYIPPDLVDLFITNLGGYPPSYLYRIMNDTYDASDTIL</sequence>
<evidence type="ECO:0000256" key="1">
    <source>
        <dbReference type="SAM" id="MobiDB-lite"/>
    </source>
</evidence>
<evidence type="ECO:0000269" key="2">
    <source>
    </source>
</evidence>
<evidence type="ECO:0000269" key="3">
    <source>
    </source>
</evidence>
<evidence type="ECO:0000269" key="4">
    <source>
    </source>
</evidence>
<evidence type="ECO:0000269" key="5">
    <source>
    </source>
</evidence>
<evidence type="ECO:0000269" key="6">
    <source>
    </source>
</evidence>
<evidence type="ECO:0000305" key="7"/>
<evidence type="ECO:0007744" key="8">
    <source>
        <dbReference type="PDB" id="5B04"/>
    </source>
</evidence>
<evidence type="ECO:0007744" key="9">
    <source>
        <dbReference type="PDB" id="6JLY"/>
    </source>
</evidence>
<evidence type="ECO:0007744" key="10">
    <source>
        <dbReference type="PDB" id="6JLZ"/>
    </source>
</evidence>
<evidence type="ECO:0007829" key="11">
    <source>
        <dbReference type="PDB" id="5B04"/>
    </source>
</evidence>
<evidence type="ECO:0007829" key="12">
    <source>
        <dbReference type="PDB" id="6JLY"/>
    </source>
</evidence>
<dbReference type="EMBL" id="CU329670">
    <property type="protein sequence ID" value="CAB52277.1"/>
    <property type="molecule type" value="Genomic_DNA"/>
</dbReference>
<dbReference type="PIR" id="T38663">
    <property type="entry name" value="T38663"/>
</dbReference>
<dbReference type="RefSeq" id="NP_593435.1">
    <property type="nucleotide sequence ID" value="NM_001018868.2"/>
</dbReference>
<dbReference type="PDB" id="5B04">
    <property type="method" value="X-ray"/>
    <property type="resolution" value="2.99 A"/>
    <property type="chains" value="C/D=1-393"/>
</dbReference>
<dbReference type="PDB" id="6JLY">
    <property type="method" value="X-ray"/>
    <property type="resolution" value="3.50 A"/>
    <property type="chains" value="C/D=1-393"/>
</dbReference>
<dbReference type="PDB" id="6JLZ">
    <property type="method" value="X-ray"/>
    <property type="resolution" value="3.35 A"/>
    <property type="chains" value="C/D=1-393"/>
</dbReference>
<dbReference type="PDBsum" id="5B04"/>
<dbReference type="PDBsum" id="6JLY"/>
<dbReference type="PDBsum" id="6JLZ"/>
<dbReference type="SMR" id="Q9UT76"/>
<dbReference type="BioGRID" id="279470">
    <property type="interactions" value="9"/>
</dbReference>
<dbReference type="DIP" id="DIP-61959N"/>
<dbReference type="FunCoup" id="Q9UT76">
    <property type="interactions" value="415"/>
</dbReference>
<dbReference type="IntAct" id="Q9UT76">
    <property type="interactions" value="3"/>
</dbReference>
<dbReference type="STRING" id="284812.Q9UT76"/>
<dbReference type="iPTMnet" id="Q9UT76"/>
<dbReference type="PaxDb" id="4896-SPAC343.14c.1"/>
<dbReference type="EnsemblFungi" id="SPAC343.14c.1">
    <property type="protein sequence ID" value="SPAC343.14c.1:pep"/>
    <property type="gene ID" value="SPAC343.14c"/>
</dbReference>
<dbReference type="GeneID" id="2543035"/>
<dbReference type="KEGG" id="spo:2543035"/>
<dbReference type="PomBase" id="SPAC343.14c">
    <property type="gene designation" value="tif222"/>
</dbReference>
<dbReference type="VEuPathDB" id="FungiDB:SPAC343.14c"/>
<dbReference type="eggNOG" id="KOG1465">
    <property type="taxonomic scope" value="Eukaryota"/>
</dbReference>
<dbReference type="HOGENOM" id="CLU_016218_4_3_1"/>
<dbReference type="InParanoid" id="Q9UT76"/>
<dbReference type="OMA" id="SHSCAVA"/>
<dbReference type="PhylomeDB" id="Q9UT76"/>
<dbReference type="Reactome" id="R-SPO-72731">
    <property type="pathway name" value="Recycling of eIF2:GDP"/>
</dbReference>
<dbReference type="PRO" id="PR:Q9UT76"/>
<dbReference type="Proteomes" id="UP000002485">
    <property type="component" value="Chromosome I"/>
</dbReference>
<dbReference type="GO" id="GO:0005829">
    <property type="term" value="C:cytosol"/>
    <property type="evidence" value="ECO:0007005"/>
    <property type="project" value="PomBase"/>
</dbReference>
<dbReference type="GO" id="GO:0005851">
    <property type="term" value="C:eukaryotic translation initiation factor 2B complex"/>
    <property type="evidence" value="ECO:0000314"/>
    <property type="project" value="PomBase"/>
</dbReference>
<dbReference type="GO" id="GO:0005085">
    <property type="term" value="F:guanyl-nucleotide exchange factor activity"/>
    <property type="evidence" value="ECO:0000314"/>
    <property type="project" value="PomBase"/>
</dbReference>
<dbReference type="GO" id="GO:0003743">
    <property type="term" value="F:translation initiation factor activity"/>
    <property type="evidence" value="ECO:0000314"/>
    <property type="project" value="PomBase"/>
</dbReference>
<dbReference type="GO" id="GO:0002183">
    <property type="term" value="P:cytoplasmic translational initiation"/>
    <property type="evidence" value="ECO:0000314"/>
    <property type="project" value="PomBase"/>
</dbReference>
<dbReference type="GO" id="GO:0006417">
    <property type="term" value="P:regulation of translation"/>
    <property type="evidence" value="ECO:0007669"/>
    <property type="project" value="UniProtKB-KW"/>
</dbReference>
<dbReference type="GO" id="GO:0006413">
    <property type="term" value="P:translational initiation"/>
    <property type="evidence" value="ECO:0000318"/>
    <property type="project" value="GO_Central"/>
</dbReference>
<dbReference type="FunFam" id="3.40.50.10470:FF:000009">
    <property type="entry name" value="Translation initiation factor eIF2B subunit"/>
    <property type="match status" value="1"/>
</dbReference>
<dbReference type="Gene3D" id="1.20.120.420">
    <property type="entry name" value="translation initiation factor eif-2b, domain 1"/>
    <property type="match status" value="1"/>
</dbReference>
<dbReference type="Gene3D" id="3.40.50.10470">
    <property type="entry name" value="Translation initiation factor eif-2b, domain 2"/>
    <property type="match status" value="1"/>
</dbReference>
<dbReference type="InterPro" id="IPR051855">
    <property type="entry name" value="eIF2B_beta_subunit"/>
</dbReference>
<dbReference type="InterPro" id="IPR000649">
    <property type="entry name" value="IF-2B-related"/>
</dbReference>
<dbReference type="InterPro" id="IPR042529">
    <property type="entry name" value="IF_2B-like_C"/>
</dbReference>
<dbReference type="InterPro" id="IPR027363">
    <property type="entry name" value="M1Pi_N"/>
</dbReference>
<dbReference type="InterPro" id="IPR037171">
    <property type="entry name" value="NagB/RpiA_transferase-like"/>
</dbReference>
<dbReference type="PANTHER" id="PTHR45859">
    <property type="entry name" value="TRANSLATION INITIATION FACTOR EIF-2B SUBUNIT BETA"/>
    <property type="match status" value="1"/>
</dbReference>
<dbReference type="PANTHER" id="PTHR45859:SF1">
    <property type="entry name" value="TRANSLATION INITIATION FACTOR EIF-2B SUBUNIT BETA"/>
    <property type="match status" value="1"/>
</dbReference>
<dbReference type="Pfam" id="PF01008">
    <property type="entry name" value="IF-2B"/>
    <property type="match status" value="1"/>
</dbReference>
<dbReference type="SUPFAM" id="SSF100950">
    <property type="entry name" value="NagB/RpiA/CoA transferase-like"/>
    <property type="match status" value="1"/>
</dbReference>
<proteinExistence type="evidence at protein level"/>
<name>EI2BB_SCHPO</name>